<gene>
    <name evidence="1" type="primary">mtnN</name>
    <name type="ordered locus">ECED1_0166</name>
</gene>
<dbReference type="EC" id="3.2.2.9" evidence="1"/>
<dbReference type="EMBL" id="CU928162">
    <property type="protein sequence ID" value="CAR06386.1"/>
    <property type="molecule type" value="Genomic_DNA"/>
</dbReference>
<dbReference type="RefSeq" id="WP_000689844.1">
    <property type="nucleotide sequence ID" value="NC_011745.1"/>
</dbReference>
<dbReference type="SMR" id="B7MP21"/>
<dbReference type="GeneID" id="93777267"/>
<dbReference type="KEGG" id="ecq:ECED1_0166"/>
<dbReference type="HOGENOM" id="CLU_031248_2_2_6"/>
<dbReference type="UniPathway" id="UPA00904">
    <property type="reaction ID" value="UER00871"/>
</dbReference>
<dbReference type="Proteomes" id="UP000000748">
    <property type="component" value="Chromosome"/>
</dbReference>
<dbReference type="GO" id="GO:0005829">
    <property type="term" value="C:cytosol"/>
    <property type="evidence" value="ECO:0007669"/>
    <property type="project" value="TreeGrafter"/>
</dbReference>
<dbReference type="GO" id="GO:0008782">
    <property type="term" value="F:adenosylhomocysteine nucleosidase activity"/>
    <property type="evidence" value="ECO:0007669"/>
    <property type="project" value="UniProtKB-UniRule"/>
</dbReference>
<dbReference type="GO" id="GO:0008930">
    <property type="term" value="F:methylthioadenosine nucleosidase activity"/>
    <property type="evidence" value="ECO:0007669"/>
    <property type="project" value="UniProtKB-UniRule"/>
</dbReference>
<dbReference type="GO" id="GO:0019509">
    <property type="term" value="P:L-methionine salvage from methylthioadenosine"/>
    <property type="evidence" value="ECO:0007669"/>
    <property type="project" value="UniProtKB-UniRule"/>
</dbReference>
<dbReference type="GO" id="GO:0019284">
    <property type="term" value="P:L-methionine salvage from S-adenosylmethionine"/>
    <property type="evidence" value="ECO:0007669"/>
    <property type="project" value="TreeGrafter"/>
</dbReference>
<dbReference type="GO" id="GO:0046124">
    <property type="term" value="P:purine deoxyribonucleoside catabolic process"/>
    <property type="evidence" value="ECO:0007669"/>
    <property type="project" value="UniProtKB-UniRule"/>
</dbReference>
<dbReference type="CDD" id="cd09008">
    <property type="entry name" value="MTAN"/>
    <property type="match status" value="1"/>
</dbReference>
<dbReference type="FunFam" id="3.40.50.1580:FF:000001">
    <property type="entry name" value="MTA/SAH nucleosidase family protein"/>
    <property type="match status" value="1"/>
</dbReference>
<dbReference type="Gene3D" id="3.40.50.1580">
    <property type="entry name" value="Nucleoside phosphorylase domain"/>
    <property type="match status" value="1"/>
</dbReference>
<dbReference type="HAMAP" id="MF_01684">
    <property type="entry name" value="Salvage_MtnN"/>
    <property type="match status" value="1"/>
</dbReference>
<dbReference type="InterPro" id="IPR010049">
    <property type="entry name" value="MTA_SAH_Nsdase"/>
</dbReference>
<dbReference type="InterPro" id="IPR000845">
    <property type="entry name" value="Nucleoside_phosphorylase_d"/>
</dbReference>
<dbReference type="InterPro" id="IPR035994">
    <property type="entry name" value="Nucleoside_phosphorylase_sf"/>
</dbReference>
<dbReference type="NCBIfam" id="TIGR01704">
    <property type="entry name" value="MTA_SAH-Nsdase"/>
    <property type="match status" value="1"/>
</dbReference>
<dbReference type="NCBIfam" id="NF004079">
    <property type="entry name" value="PRK05584.1"/>
    <property type="match status" value="1"/>
</dbReference>
<dbReference type="PANTHER" id="PTHR46832">
    <property type="entry name" value="5'-METHYLTHIOADENOSINE/S-ADENOSYLHOMOCYSTEINE NUCLEOSIDASE"/>
    <property type="match status" value="1"/>
</dbReference>
<dbReference type="PANTHER" id="PTHR46832:SF1">
    <property type="entry name" value="5'-METHYLTHIOADENOSINE_S-ADENOSYLHOMOCYSTEINE NUCLEOSIDASE"/>
    <property type="match status" value="1"/>
</dbReference>
<dbReference type="Pfam" id="PF01048">
    <property type="entry name" value="PNP_UDP_1"/>
    <property type="match status" value="1"/>
</dbReference>
<dbReference type="SUPFAM" id="SSF53167">
    <property type="entry name" value="Purine and uridine phosphorylases"/>
    <property type="match status" value="1"/>
</dbReference>
<reference key="1">
    <citation type="journal article" date="2009" name="PLoS Genet.">
        <title>Organised genome dynamics in the Escherichia coli species results in highly diverse adaptive paths.</title>
        <authorList>
            <person name="Touchon M."/>
            <person name="Hoede C."/>
            <person name="Tenaillon O."/>
            <person name="Barbe V."/>
            <person name="Baeriswyl S."/>
            <person name="Bidet P."/>
            <person name="Bingen E."/>
            <person name="Bonacorsi S."/>
            <person name="Bouchier C."/>
            <person name="Bouvet O."/>
            <person name="Calteau A."/>
            <person name="Chiapello H."/>
            <person name="Clermont O."/>
            <person name="Cruveiller S."/>
            <person name="Danchin A."/>
            <person name="Diard M."/>
            <person name="Dossat C."/>
            <person name="Karoui M.E."/>
            <person name="Frapy E."/>
            <person name="Garry L."/>
            <person name="Ghigo J.M."/>
            <person name="Gilles A.M."/>
            <person name="Johnson J."/>
            <person name="Le Bouguenec C."/>
            <person name="Lescat M."/>
            <person name="Mangenot S."/>
            <person name="Martinez-Jehanne V."/>
            <person name="Matic I."/>
            <person name="Nassif X."/>
            <person name="Oztas S."/>
            <person name="Petit M.A."/>
            <person name="Pichon C."/>
            <person name="Rouy Z."/>
            <person name="Ruf C.S."/>
            <person name="Schneider D."/>
            <person name="Tourret J."/>
            <person name="Vacherie B."/>
            <person name="Vallenet D."/>
            <person name="Medigue C."/>
            <person name="Rocha E.P.C."/>
            <person name="Denamur E."/>
        </authorList>
    </citation>
    <scope>NUCLEOTIDE SEQUENCE [LARGE SCALE GENOMIC DNA]</scope>
    <source>
        <strain>ED1a</strain>
    </source>
</reference>
<name>MTNN_ECO81</name>
<keyword id="KW-0028">Amino-acid biosynthesis</keyword>
<keyword id="KW-0378">Hydrolase</keyword>
<keyword id="KW-0486">Methionine biosynthesis</keyword>
<proteinExistence type="inferred from homology"/>
<accession>B7MP21</accession>
<sequence>MKIGIIGAMEEEVTLLRDKIENRQTISLGGCEIYTGQLNGTEVALLKSGIGKVAAALGATLLLEHCKPDVIINTGSAGGLAPTLKVGDIVVSDEARYHDADVTAFGYEYGQLPGCPAGFKADDKLIAAAEACIAELNLNAVRGLIVSGDAFINGSVGLAKIRHNFPQAIAVEMEATAIAHVCHNFNVPFVVVRAISDVADQQSHLSFDEFLAVAAKQSSLMVESLVQKLAHG</sequence>
<feature type="chain" id="PRO_1000187421" description="5'-methylthioadenosine/S-adenosylhomocysteine nucleosidase">
    <location>
        <begin position="1"/>
        <end position="232"/>
    </location>
</feature>
<feature type="active site" description="Proton acceptor" evidence="1">
    <location>
        <position position="12"/>
    </location>
</feature>
<feature type="active site" description="Proton donor" evidence="1">
    <location>
        <position position="197"/>
    </location>
</feature>
<feature type="binding site" evidence="1">
    <location>
        <position position="78"/>
    </location>
    <ligand>
        <name>substrate</name>
    </ligand>
</feature>
<feature type="binding site" evidence="1">
    <location>
        <position position="152"/>
    </location>
    <ligand>
        <name>substrate</name>
    </ligand>
</feature>
<feature type="binding site" evidence="1">
    <location>
        <begin position="173"/>
        <end position="174"/>
    </location>
    <ligand>
        <name>substrate</name>
    </ligand>
</feature>
<evidence type="ECO:0000255" key="1">
    <source>
        <dbReference type="HAMAP-Rule" id="MF_01684"/>
    </source>
</evidence>
<organism>
    <name type="scientific">Escherichia coli O81 (strain ED1a)</name>
    <dbReference type="NCBI Taxonomy" id="585397"/>
    <lineage>
        <taxon>Bacteria</taxon>
        <taxon>Pseudomonadati</taxon>
        <taxon>Pseudomonadota</taxon>
        <taxon>Gammaproteobacteria</taxon>
        <taxon>Enterobacterales</taxon>
        <taxon>Enterobacteriaceae</taxon>
        <taxon>Escherichia</taxon>
    </lineage>
</organism>
<comment type="function">
    <text evidence="1">Catalyzes the irreversible cleavage of the glycosidic bond in both 5'-methylthioadenosine (MTA) and S-adenosylhomocysteine (SAH/AdoHcy) to adenine and the corresponding thioribose, 5'-methylthioribose and S-ribosylhomocysteine, respectively. Also cleaves 5'-deoxyadenosine, a toxic by-product of radical S-adenosylmethionine (SAM) enzymes, into 5-deoxyribose and adenine. Thus, is required for in vivo function of the radical SAM enzymes biotin synthase and lipoic acid synthase, that are inhibited by 5'-deoxyadenosine accumulation.</text>
</comment>
<comment type="catalytic activity">
    <reaction evidence="1">
        <text>S-adenosyl-L-homocysteine + H2O = S-(5-deoxy-D-ribos-5-yl)-L-homocysteine + adenine</text>
        <dbReference type="Rhea" id="RHEA:17805"/>
        <dbReference type="ChEBI" id="CHEBI:15377"/>
        <dbReference type="ChEBI" id="CHEBI:16708"/>
        <dbReference type="ChEBI" id="CHEBI:57856"/>
        <dbReference type="ChEBI" id="CHEBI:58195"/>
        <dbReference type="EC" id="3.2.2.9"/>
    </reaction>
</comment>
<comment type="catalytic activity">
    <reaction evidence="1">
        <text>S-methyl-5'-thioadenosine + H2O = 5-(methylsulfanyl)-D-ribose + adenine</text>
        <dbReference type="Rhea" id="RHEA:13617"/>
        <dbReference type="ChEBI" id="CHEBI:15377"/>
        <dbReference type="ChEBI" id="CHEBI:16708"/>
        <dbReference type="ChEBI" id="CHEBI:17509"/>
        <dbReference type="ChEBI" id="CHEBI:78440"/>
        <dbReference type="EC" id="3.2.2.9"/>
    </reaction>
</comment>
<comment type="catalytic activity">
    <reaction evidence="1">
        <text>5'-deoxyadenosine + H2O = 5-deoxy-D-ribose + adenine</text>
        <dbReference type="Rhea" id="RHEA:29859"/>
        <dbReference type="ChEBI" id="CHEBI:15377"/>
        <dbReference type="ChEBI" id="CHEBI:16708"/>
        <dbReference type="ChEBI" id="CHEBI:17319"/>
        <dbReference type="ChEBI" id="CHEBI:149540"/>
        <dbReference type="EC" id="3.2.2.9"/>
    </reaction>
    <physiologicalReaction direction="left-to-right" evidence="1">
        <dbReference type="Rhea" id="RHEA:29860"/>
    </physiologicalReaction>
</comment>
<comment type="pathway">
    <text evidence="1">Amino-acid biosynthesis; L-methionine biosynthesis via salvage pathway; S-methyl-5-thio-alpha-D-ribose 1-phosphate from S-methyl-5'-thioadenosine (hydrolase route): step 1/2.</text>
</comment>
<comment type="subunit">
    <text evidence="1">Homodimer.</text>
</comment>
<comment type="similarity">
    <text evidence="1">Belongs to the PNP/UDP phosphorylase family. MtnN subfamily.</text>
</comment>
<protein>
    <recommendedName>
        <fullName evidence="1">5'-methylthioadenosine/S-adenosylhomocysteine nucleosidase</fullName>
        <shortName evidence="1">MTA/SAH nucleosidase</shortName>
        <shortName evidence="1">MTAN</shortName>
        <ecNumber evidence="1">3.2.2.9</ecNumber>
    </recommendedName>
    <alternativeName>
        <fullName evidence="1">5'-deoxyadenosine nucleosidase</fullName>
        <shortName evidence="1">DOA nucleosidase</shortName>
        <shortName evidence="1">dAdo nucleosidase</shortName>
    </alternativeName>
    <alternativeName>
        <fullName evidence="1">5'-methylthioadenosine nucleosidase</fullName>
        <shortName evidence="1">MTA nucleosidase</shortName>
    </alternativeName>
    <alternativeName>
        <fullName evidence="1">S-adenosylhomocysteine nucleosidase</fullName>
        <shortName evidence="1">AdoHcy nucleosidase</shortName>
        <shortName evidence="1">SAH nucleosidase</shortName>
        <shortName evidence="1">SRH nucleosidase</shortName>
    </alternativeName>
</protein>